<reference key="1">
    <citation type="journal article" date="2003" name="Proc. Natl. Acad. Sci. U.S.A.">
        <title>The complete genome sequence of Mycobacterium bovis.</title>
        <authorList>
            <person name="Garnier T."/>
            <person name="Eiglmeier K."/>
            <person name="Camus J.-C."/>
            <person name="Medina N."/>
            <person name="Mansoor H."/>
            <person name="Pryor M."/>
            <person name="Duthoy S."/>
            <person name="Grondin S."/>
            <person name="Lacroix C."/>
            <person name="Monsempe C."/>
            <person name="Simon S."/>
            <person name="Harris B."/>
            <person name="Atkin R."/>
            <person name="Doggett J."/>
            <person name="Mayes R."/>
            <person name="Keating L."/>
            <person name="Wheeler P.R."/>
            <person name="Parkhill J."/>
            <person name="Barrell B.G."/>
            <person name="Cole S.T."/>
            <person name="Gordon S.V."/>
            <person name="Hewinson R.G."/>
        </authorList>
    </citation>
    <scope>NUCLEOTIDE SEQUENCE [LARGE SCALE GENOMIC DNA]</scope>
    <source>
        <strain>ATCC BAA-935 / AF2122/97</strain>
    </source>
</reference>
<reference key="2">
    <citation type="journal article" date="2017" name="Genome Announc.">
        <title>Updated reference genome sequence and annotation of Mycobacterium bovis AF2122/97.</title>
        <authorList>
            <person name="Malone K.M."/>
            <person name="Farrell D."/>
            <person name="Stuber T.P."/>
            <person name="Schubert O.T."/>
            <person name="Aebersold R."/>
            <person name="Robbe-Austerman S."/>
            <person name="Gordon S.V."/>
        </authorList>
    </citation>
    <scope>NUCLEOTIDE SEQUENCE [LARGE SCALE GENOMIC DNA]</scope>
    <scope>GENOME REANNOTATION</scope>
    <source>
        <strain>ATCC BAA-935 / AF2122/97</strain>
    </source>
</reference>
<name>Y1858_MYCBO</name>
<keyword id="KW-0002">3D-structure</keyword>
<keyword id="KW-0597">Phosphoprotein</keyword>
<keyword id="KW-1185">Reference proteome</keyword>
<gene>
    <name type="ordered locus">BQ2027_MB1858</name>
</gene>
<accession>P64898</accession>
<accession>A0A1R3XZE6</accession>
<accession>Q50606</accession>
<accession>X2BIL3</accession>
<evidence type="ECO:0000250" key="1"/>
<evidence type="ECO:0000255" key="2">
    <source>
        <dbReference type="PROSITE-ProRule" id="PRU00086"/>
    </source>
</evidence>
<evidence type="ECO:0007829" key="3">
    <source>
        <dbReference type="PDB" id="2KKL"/>
    </source>
</evidence>
<sequence>MTDMNPDIEKDQTSDEVTVETTSVFRADFLSELDAPAQAGTESAVSGVEGLPPGSALLVVKRGPNAGSRFLLDQAITSAGRHPDSDIFLDDVTVSRRHAEFRLENNEFNVVDVGSLNGTYVNREPVDSAVLANGDEVQIGKFRLVFLTGPKQGEDDGSTGGP</sequence>
<dbReference type="EMBL" id="LT708304">
    <property type="protein sequence ID" value="SIU00462.1"/>
    <property type="molecule type" value="Genomic_DNA"/>
</dbReference>
<dbReference type="RefSeq" id="NP_855510.1">
    <property type="nucleotide sequence ID" value="NC_002945.3"/>
</dbReference>
<dbReference type="PDB" id="2KKL">
    <property type="method" value="NMR"/>
    <property type="chains" value="A=24-155"/>
</dbReference>
<dbReference type="PDBsum" id="2KKL"/>
<dbReference type="BMRB" id="P64898"/>
<dbReference type="SMR" id="P64898"/>
<dbReference type="KEGG" id="mbo:BQ2027_MB1858"/>
<dbReference type="PATRIC" id="fig|233413.5.peg.2038"/>
<dbReference type="EvolutionaryTrace" id="P64898"/>
<dbReference type="Proteomes" id="UP000001419">
    <property type="component" value="Chromosome"/>
</dbReference>
<dbReference type="CDD" id="cd22720">
    <property type="entry name" value="FHA_GarA-like"/>
    <property type="match status" value="1"/>
</dbReference>
<dbReference type="FunFam" id="2.60.200.20:FF:000027">
    <property type="entry name" value="Peptide-binding protein"/>
    <property type="match status" value="1"/>
</dbReference>
<dbReference type="Gene3D" id="2.60.200.20">
    <property type="match status" value="1"/>
</dbReference>
<dbReference type="InterPro" id="IPR050923">
    <property type="entry name" value="Cell_Proc_Reg/RNA_Proc"/>
</dbReference>
<dbReference type="InterPro" id="IPR000253">
    <property type="entry name" value="FHA_dom"/>
</dbReference>
<dbReference type="InterPro" id="IPR008984">
    <property type="entry name" value="SMAD_FHA_dom_sf"/>
</dbReference>
<dbReference type="PANTHER" id="PTHR23308">
    <property type="entry name" value="NUCLEAR INHIBITOR OF PROTEIN PHOSPHATASE-1"/>
    <property type="match status" value="1"/>
</dbReference>
<dbReference type="Pfam" id="PF00498">
    <property type="entry name" value="FHA"/>
    <property type="match status" value="1"/>
</dbReference>
<dbReference type="SMART" id="SM00240">
    <property type="entry name" value="FHA"/>
    <property type="match status" value="1"/>
</dbReference>
<dbReference type="SUPFAM" id="SSF49879">
    <property type="entry name" value="SMAD/FHA domain"/>
    <property type="match status" value="1"/>
</dbReference>
<dbReference type="PROSITE" id="PS50006">
    <property type="entry name" value="FHA_DOMAIN"/>
    <property type="match status" value="1"/>
</dbReference>
<feature type="chain" id="PRO_0000103903" description="Uncharacterized protein Mb1858">
    <location>
        <begin position="1"/>
        <end position="162"/>
    </location>
</feature>
<feature type="domain" description="FHA" evidence="2">
    <location>
        <begin position="77"/>
        <end position="126"/>
    </location>
</feature>
<feature type="modified residue" description="Phosphothreonine; by PknB" evidence="1">
    <location>
        <position position="22"/>
    </location>
</feature>
<feature type="strand" evidence="3">
    <location>
        <begin position="28"/>
        <end position="30"/>
    </location>
</feature>
<feature type="turn" evidence="3">
    <location>
        <begin position="47"/>
        <end position="50"/>
    </location>
</feature>
<feature type="turn" evidence="3">
    <location>
        <begin position="52"/>
        <end position="54"/>
    </location>
</feature>
<feature type="strand" evidence="3">
    <location>
        <begin position="56"/>
        <end position="63"/>
    </location>
</feature>
<feature type="turn" evidence="3">
    <location>
        <begin position="64"/>
        <end position="67"/>
    </location>
</feature>
<feature type="strand" evidence="3">
    <location>
        <begin position="69"/>
        <end position="72"/>
    </location>
</feature>
<feature type="strand" evidence="3">
    <location>
        <begin position="74"/>
        <end position="80"/>
    </location>
</feature>
<feature type="strand" evidence="3">
    <location>
        <begin position="82"/>
        <end position="84"/>
    </location>
</feature>
<feature type="strand" evidence="3">
    <location>
        <begin position="91"/>
        <end position="94"/>
    </location>
</feature>
<feature type="strand" evidence="3">
    <location>
        <begin position="98"/>
        <end position="104"/>
    </location>
</feature>
<feature type="strand" evidence="3">
    <location>
        <begin position="107"/>
        <end position="111"/>
    </location>
</feature>
<feature type="strand" evidence="3">
    <location>
        <begin position="114"/>
        <end position="117"/>
    </location>
</feature>
<feature type="strand" evidence="3">
    <location>
        <begin position="120"/>
        <end position="123"/>
    </location>
</feature>
<feature type="strand" evidence="3">
    <location>
        <begin position="127"/>
        <end position="130"/>
    </location>
</feature>
<feature type="strand" evidence="3">
    <location>
        <begin position="135"/>
        <end position="139"/>
    </location>
</feature>
<feature type="strand" evidence="3">
    <location>
        <begin position="142"/>
        <end position="148"/>
    </location>
</feature>
<organism>
    <name type="scientific">Mycobacterium bovis (strain ATCC BAA-935 / AF2122/97)</name>
    <dbReference type="NCBI Taxonomy" id="233413"/>
    <lineage>
        <taxon>Bacteria</taxon>
        <taxon>Bacillati</taxon>
        <taxon>Actinomycetota</taxon>
        <taxon>Actinomycetes</taxon>
        <taxon>Mycobacteriales</taxon>
        <taxon>Mycobacteriaceae</taxon>
        <taxon>Mycobacterium</taxon>
        <taxon>Mycobacterium tuberculosis complex</taxon>
    </lineage>
</organism>
<protein>
    <recommendedName>
        <fullName>Uncharacterized protein Mb1858</fullName>
    </recommendedName>
</protein>
<proteinExistence type="evidence at protein level"/>